<dbReference type="EC" id="1.14.-.-" evidence="1"/>
<dbReference type="EMBL" id="BA000003">
    <property type="protein sequence ID" value="BAB13069.1"/>
    <property type="molecule type" value="Genomic_DNA"/>
</dbReference>
<dbReference type="RefSeq" id="NP_240183.1">
    <property type="nucleotide sequence ID" value="NC_002528.1"/>
</dbReference>
<dbReference type="RefSeq" id="WP_010896087.1">
    <property type="nucleotide sequence ID" value="NC_002528.1"/>
</dbReference>
<dbReference type="SMR" id="P57446"/>
<dbReference type="STRING" id="563178.BUAP5A_358"/>
<dbReference type="EnsemblBacteria" id="BAB13069">
    <property type="protein sequence ID" value="BAB13069"/>
    <property type="gene ID" value="BAB13069"/>
</dbReference>
<dbReference type="KEGG" id="buc:BU365"/>
<dbReference type="PATRIC" id="fig|107806.10.peg.379"/>
<dbReference type="eggNOG" id="COG1054">
    <property type="taxonomic scope" value="Bacteria"/>
</dbReference>
<dbReference type="HOGENOM" id="CLU_038878_1_1_6"/>
<dbReference type="BioCyc" id="BAPH107806:GBZJ-358-MONOMER"/>
<dbReference type="Proteomes" id="UP000001806">
    <property type="component" value="Chromosome"/>
</dbReference>
<dbReference type="GO" id="GO:0016705">
    <property type="term" value="F:oxidoreductase activity, acting on paired donors, with incorporation or reduction of molecular oxygen"/>
    <property type="evidence" value="ECO:0007669"/>
    <property type="project" value="UniProtKB-UniRule"/>
</dbReference>
<dbReference type="GO" id="GO:0006400">
    <property type="term" value="P:tRNA modification"/>
    <property type="evidence" value="ECO:0007669"/>
    <property type="project" value="UniProtKB-UniRule"/>
</dbReference>
<dbReference type="CDD" id="cd01518">
    <property type="entry name" value="RHOD_YceA"/>
    <property type="match status" value="1"/>
</dbReference>
<dbReference type="Gene3D" id="3.30.70.100">
    <property type="match status" value="1"/>
</dbReference>
<dbReference type="Gene3D" id="3.40.250.10">
    <property type="entry name" value="Rhodanese-like domain"/>
    <property type="match status" value="1"/>
</dbReference>
<dbReference type="HAMAP" id="MF_00469">
    <property type="entry name" value="TrhO"/>
    <property type="match status" value="1"/>
</dbReference>
<dbReference type="InterPro" id="IPR001763">
    <property type="entry name" value="Rhodanese-like_dom"/>
</dbReference>
<dbReference type="InterPro" id="IPR036873">
    <property type="entry name" value="Rhodanese-like_dom_sf"/>
</dbReference>
<dbReference type="InterPro" id="IPR022111">
    <property type="entry name" value="Rhodanese_C"/>
</dbReference>
<dbReference type="InterPro" id="IPR020936">
    <property type="entry name" value="TrhO"/>
</dbReference>
<dbReference type="InterPro" id="IPR040503">
    <property type="entry name" value="TRHO_N"/>
</dbReference>
<dbReference type="NCBIfam" id="NF001133">
    <property type="entry name" value="PRK00142.1-1"/>
    <property type="match status" value="1"/>
</dbReference>
<dbReference type="PANTHER" id="PTHR43846:SF1">
    <property type="entry name" value="TRNA URIDINE(34) HYDROXYLASE"/>
    <property type="match status" value="1"/>
</dbReference>
<dbReference type="PANTHER" id="PTHR43846">
    <property type="entry name" value="UPF0176 PROTEIN YCEA"/>
    <property type="match status" value="1"/>
</dbReference>
<dbReference type="Pfam" id="PF00581">
    <property type="entry name" value="Rhodanese"/>
    <property type="match status" value="1"/>
</dbReference>
<dbReference type="Pfam" id="PF12368">
    <property type="entry name" value="Rhodanese_C"/>
    <property type="match status" value="1"/>
</dbReference>
<dbReference type="Pfam" id="PF17773">
    <property type="entry name" value="UPF0176_N"/>
    <property type="match status" value="1"/>
</dbReference>
<dbReference type="SMART" id="SM00450">
    <property type="entry name" value="RHOD"/>
    <property type="match status" value="1"/>
</dbReference>
<dbReference type="SUPFAM" id="SSF52821">
    <property type="entry name" value="Rhodanese/Cell cycle control phosphatase"/>
    <property type="match status" value="1"/>
</dbReference>
<dbReference type="PROSITE" id="PS50206">
    <property type="entry name" value="RHODANESE_3"/>
    <property type="match status" value="1"/>
</dbReference>
<evidence type="ECO:0000255" key="1">
    <source>
        <dbReference type="HAMAP-Rule" id="MF_00469"/>
    </source>
</evidence>
<organism>
    <name type="scientific">Buchnera aphidicola subsp. Acyrthosiphon pisum (strain APS)</name>
    <name type="common">Acyrthosiphon pisum symbiotic bacterium</name>
    <dbReference type="NCBI Taxonomy" id="107806"/>
    <lineage>
        <taxon>Bacteria</taxon>
        <taxon>Pseudomonadati</taxon>
        <taxon>Pseudomonadota</taxon>
        <taxon>Gammaproteobacteria</taxon>
        <taxon>Enterobacterales</taxon>
        <taxon>Erwiniaceae</taxon>
        <taxon>Buchnera</taxon>
    </lineage>
</organism>
<accession>P57446</accession>
<proteinExistence type="inferred from homology"/>
<gene>
    <name evidence="1" type="primary">trhO</name>
    <name type="ordered locus">BU365</name>
</gene>
<keyword id="KW-0560">Oxidoreductase</keyword>
<keyword id="KW-1185">Reference proteome</keyword>
<keyword id="KW-0819">tRNA processing</keyword>
<name>TRHO_BUCAI</name>
<protein>
    <recommendedName>
        <fullName evidence="1">tRNA uridine(34) hydroxylase</fullName>
        <ecNumber evidence="1">1.14.-.-</ecNumber>
    </recommendedName>
    <alternativeName>
        <fullName evidence="1">tRNA hydroxylation protein O</fullName>
    </alternativeName>
</protein>
<reference key="1">
    <citation type="journal article" date="2000" name="Nature">
        <title>Genome sequence of the endocellular bacterial symbiont of aphids Buchnera sp. APS.</title>
        <authorList>
            <person name="Shigenobu S."/>
            <person name="Watanabe H."/>
            <person name="Hattori M."/>
            <person name="Sakaki Y."/>
            <person name="Ishikawa H."/>
        </authorList>
    </citation>
    <scope>NUCLEOTIDE SEQUENCE [LARGE SCALE GENOMIC DNA]</scope>
    <source>
        <strain>APS</strain>
    </source>
</reference>
<feature type="chain" id="PRO_0000161455" description="tRNA uridine(34) hydroxylase">
    <location>
        <begin position="1"/>
        <end position="324"/>
    </location>
</feature>
<feature type="domain" description="Rhodanese" evidence="1">
    <location>
        <begin position="145"/>
        <end position="239"/>
    </location>
</feature>
<feature type="active site" description="Cysteine persulfide intermediate" evidence="1">
    <location>
        <position position="199"/>
    </location>
</feature>
<sequence length="324" mass="38405">MSILHNIVSKKELKRRMFFETEPRLTLSFYKYFFIKNTQEYRDRLYKTFYKYNVLGRIYVASEGINAQISVPKKYYSILKKFLYNFDIELNNLRINKSLDNEKSFWVLCVKIKKKIVQDGIKEHFFNPNNVGIYIQSEQVNSMLNDKKTIFIDMRNSYEYAIGHFENAIEIKSITFREQLKKVIQLMAYAKNKKIVMYCTGGIRCEKATSWMLFNGFKHVYHLEGGIIGYVHDARKNGLPVLFKGKSFVFDNRMSEKISDEVISYCKQCGKSSDVYINCKYSSCHLLFIQCENCSVKFHSCCSLECMKKYKFYMLNNDLKKISY</sequence>
<comment type="function">
    <text evidence="1">Catalyzes oxygen-dependent 5-hydroxyuridine (ho5U) modification at position 34 in tRNAs.</text>
</comment>
<comment type="catalytic activity">
    <reaction evidence="1">
        <text>uridine(34) in tRNA + AH2 + O2 = 5-hydroxyuridine(34) in tRNA + A + H2O</text>
        <dbReference type="Rhea" id="RHEA:64224"/>
        <dbReference type="Rhea" id="RHEA-COMP:11727"/>
        <dbReference type="Rhea" id="RHEA-COMP:13381"/>
        <dbReference type="ChEBI" id="CHEBI:13193"/>
        <dbReference type="ChEBI" id="CHEBI:15377"/>
        <dbReference type="ChEBI" id="CHEBI:15379"/>
        <dbReference type="ChEBI" id="CHEBI:17499"/>
        <dbReference type="ChEBI" id="CHEBI:65315"/>
        <dbReference type="ChEBI" id="CHEBI:136877"/>
    </reaction>
</comment>
<comment type="similarity">
    <text evidence="1">Belongs to the TrhO family.</text>
</comment>